<name>HXB5_MOUSE</name>
<comment type="function">
    <text>Sequence-specific transcription factor which is part of a developmental regulatory system that provides cells with specific positional identities on the anterior-posterior axis.</text>
</comment>
<comment type="interaction">
    <interactant intactId="EBI-26671239">
        <id>P09079</id>
    </interactant>
    <interactant intactId="EBI-26671189">
        <id>O35317</id>
        <label>Pbx3</label>
    </interactant>
    <organismsDiffer>false</organismsDiffer>
    <experiments>2</experiments>
</comment>
<comment type="subcellular location">
    <subcellularLocation>
        <location>Nucleus</location>
    </subcellularLocation>
</comment>
<comment type="tissue specificity">
    <text>Expressed in a broad spectrum of tissues.</text>
</comment>
<comment type="developmental stage">
    <text>Embryo.</text>
</comment>
<comment type="similarity">
    <text evidence="3">Belongs to the Antp homeobox family.</text>
</comment>
<reference key="1">
    <citation type="journal article" date="1987" name="Development">
        <title>Developmental and spatial patterns of expression of the mouse homeobox gene, Hox 2.1.</title>
        <authorList>
            <person name="Krumlauf R."/>
            <person name="Holland P.W.H."/>
            <person name="McVey J.H."/>
            <person name="Hogan B.L.M."/>
        </authorList>
    </citation>
    <scope>NUCLEOTIDE SEQUENCE [MRNA]</scope>
    <source>
        <strain>C57BL/6J</strain>
    </source>
</reference>
<reference key="2">
    <citation type="journal article" date="2005" name="Science">
        <title>The transcriptional landscape of the mammalian genome.</title>
        <authorList>
            <person name="Carninci P."/>
            <person name="Kasukawa T."/>
            <person name="Katayama S."/>
            <person name="Gough J."/>
            <person name="Frith M.C."/>
            <person name="Maeda N."/>
            <person name="Oyama R."/>
            <person name="Ravasi T."/>
            <person name="Lenhard B."/>
            <person name="Wells C."/>
            <person name="Kodzius R."/>
            <person name="Shimokawa K."/>
            <person name="Bajic V.B."/>
            <person name="Brenner S.E."/>
            <person name="Batalov S."/>
            <person name="Forrest A.R."/>
            <person name="Zavolan M."/>
            <person name="Davis M.J."/>
            <person name="Wilming L.G."/>
            <person name="Aidinis V."/>
            <person name="Allen J.E."/>
            <person name="Ambesi-Impiombato A."/>
            <person name="Apweiler R."/>
            <person name="Aturaliya R.N."/>
            <person name="Bailey T.L."/>
            <person name="Bansal M."/>
            <person name="Baxter L."/>
            <person name="Beisel K.W."/>
            <person name="Bersano T."/>
            <person name="Bono H."/>
            <person name="Chalk A.M."/>
            <person name="Chiu K.P."/>
            <person name="Choudhary V."/>
            <person name="Christoffels A."/>
            <person name="Clutterbuck D.R."/>
            <person name="Crowe M.L."/>
            <person name="Dalla E."/>
            <person name="Dalrymple B.P."/>
            <person name="de Bono B."/>
            <person name="Della Gatta G."/>
            <person name="di Bernardo D."/>
            <person name="Down T."/>
            <person name="Engstrom P."/>
            <person name="Fagiolini M."/>
            <person name="Faulkner G."/>
            <person name="Fletcher C.F."/>
            <person name="Fukushima T."/>
            <person name="Furuno M."/>
            <person name="Futaki S."/>
            <person name="Gariboldi M."/>
            <person name="Georgii-Hemming P."/>
            <person name="Gingeras T.R."/>
            <person name="Gojobori T."/>
            <person name="Green R.E."/>
            <person name="Gustincich S."/>
            <person name="Harbers M."/>
            <person name="Hayashi Y."/>
            <person name="Hensch T.K."/>
            <person name="Hirokawa N."/>
            <person name="Hill D."/>
            <person name="Huminiecki L."/>
            <person name="Iacono M."/>
            <person name="Ikeo K."/>
            <person name="Iwama A."/>
            <person name="Ishikawa T."/>
            <person name="Jakt M."/>
            <person name="Kanapin A."/>
            <person name="Katoh M."/>
            <person name="Kawasawa Y."/>
            <person name="Kelso J."/>
            <person name="Kitamura H."/>
            <person name="Kitano H."/>
            <person name="Kollias G."/>
            <person name="Krishnan S.P."/>
            <person name="Kruger A."/>
            <person name="Kummerfeld S.K."/>
            <person name="Kurochkin I.V."/>
            <person name="Lareau L.F."/>
            <person name="Lazarevic D."/>
            <person name="Lipovich L."/>
            <person name="Liu J."/>
            <person name="Liuni S."/>
            <person name="McWilliam S."/>
            <person name="Madan Babu M."/>
            <person name="Madera M."/>
            <person name="Marchionni L."/>
            <person name="Matsuda H."/>
            <person name="Matsuzawa S."/>
            <person name="Miki H."/>
            <person name="Mignone F."/>
            <person name="Miyake S."/>
            <person name="Morris K."/>
            <person name="Mottagui-Tabar S."/>
            <person name="Mulder N."/>
            <person name="Nakano N."/>
            <person name="Nakauchi H."/>
            <person name="Ng P."/>
            <person name="Nilsson R."/>
            <person name="Nishiguchi S."/>
            <person name="Nishikawa S."/>
            <person name="Nori F."/>
            <person name="Ohara O."/>
            <person name="Okazaki Y."/>
            <person name="Orlando V."/>
            <person name="Pang K.C."/>
            <person name="Pavan W.J."/>
            <person name="Pavesi G."/>
            <person name="Pesole G."/>
            <person name="Petrovsky N."/>
            <person name="Piazza S."/>
            <person name="Reed J."/>
            <person name="Reid J.F."/>
            <person name="Ring B.Z."/>
            <person name="Ringwald M."/>
            <person name="Rost B."/>
            <person name="Ruan Y."/>
            <person name="Salzberg S.L."/>
            <person name="Sandelin A."/>
            <person name="Schneider C."/>
            <person name="Schoenbach C."/>
            <person name="Sekiguchi K."/>
            <person name="Semple C.A."/>
            <person name="Seno S."/>
            <person name="Sessa L."/>
            <person name="Sheng Y."/>
            <person name="Shibata Y."/>
            <person name="Shimada H."/>
            <person name="Shimada K."/>
            <person name="Silva D."/>
            <person name="Sinclair B."/>
            <person name="Sperling S."/>
            <person name="Stupka E."/>
            <person name="Sugiura K."/>
            <person name="Sultana R."/>
            <person name="Takenaka Y."/>
            <person name="Taki K."/>
            <person name="Tammoja K."/>
            <person name="Tan S.L."/>
            <person name="Tang S."/>
            <person name="Taylor M.S."/>
            <person name="Tegner J."/>
            <person name="Teichmann S.A."/>
            <person name="Ueda H.R."/>
            <person name="van Nimwegen E."/>
            <person name="Verardo R."/>
            <person name="Wei C.L."/>
            <person name="Yagi K."/>
            <person name="Yamanishi H."/>
            <person name="Zabarovsky E."/>
            <person name="Zhu S."/>
            <person name="Zimmer A."/>
            <person name="Hide W."/>
            <person name="Bult C."/>
            <person name="Grimmond S.M."/>
            <person name="Teasdale R.D."/>
            <person name="Liu E.T."/>
            <person name="Brusic V."/>
            <person name="Quackenbush J."/>
            <person name="Wahlestedt C."/>
            <person name="Mattick J.S."/>
            <person name="Hume D.A."/>
            <person name="Kai C."/>
            <person name="Sasaki D."/>
            <person name="Tomaru Y."/>
            <person name="Fukuda S."/>
            <person name="Kanamori-Katayama M."/>
            <person name="Suzuki M."/>
            <person name="Aoki J."/>
            <person name="Arakawa T."/>
            <person name="Iida J."/>
            <person name="Imamura K."/>
            <person name="Itoh M."/>
            <person name="Kato T."/>
            <person name="Kawaji H."/>
            <person name="Kawagashira N."/>
            <person name="Kawashima T."/>
            <person name="Kojima M."/>
            <person name="Kondo S."/>
            <person name="Konno H."/>
            <person name="Nakano K."/>
            <person name="Ninomiya N."/>
            <person name="Nishio T."/>
            <person name="Okada M."/>
            <person name="Plessy C."/>
            <person name="Shibata K."/>
            <person name="Shiraki T."/>
            <person name="Suzuki S."/>
            <person name="Tagami M."/>
            <person name="Waki K."/>
            <person name="Watahiki A."/>
            <person name="Okamura-Oho Y."/>
            <person name="Suzuki H."/>
            <person name="Kawai J."/>
            <person name="Hayashizaki Y."/>
        </authorList>
    </citation>
    <scope>NUCLEOTIDE SEQUENCE [LARGE SCALE MRNA]</scope>
    <source>
        <strain>C57BL/6J</strain>
    </source>
</reference>
<reference key="3">
    <citation type="journal article" date="2004" name="Genome Res.">
        <title>The status, quality, and expansion of the NIH full-length cDNA project: the Mammalian Gene Collection (MGC).</title>
        <authorList>
            <consortium name="The MGC Project Team"/>
        </authorList>
    </citation>
    <scope>NUCLEOTIDE SEQUENCE [LARGE SCALE MRNA]</scope>
</reference>
<reference key="4">
    <citation type="submission" date="1994-10" db="EMBL/GenBank/DDBJ databases">
        <title>Studies on the Hox-B5 gene.</title>
        <authorList>
            <person name="Arnold J.M."/>
        </authorList>
    </citation>
    <scope>NUCLEOTIDE SEQUENCE [GENOMIC DNA] OF 1-37</scope>
</reference>
<reference key="5">
    <citation type="journal article" date="1985" name="Nature">
        <title>A mouse homoeo box gene is expressed during embryogenesis and in adult kidney.</title>
        <authorList>
            <person name="Jackson I.J."/>
            <person name="Schofield P."/>
            <person name="Hogan B.L.M."/>
        </authorList>
    </citation>
    <scope>NUCLEOTIDE SEQUENCE [GENOMIC DNA] OF 194-259</scope>
</reference>
<reference key="6">
    <citation type="journal article" date="1985" name="Cell">
        <title>Expression of homologous homeo-box-containing genes in differentiated human teratocarcinoma cells and mouse embryos.</title>
        <authorList>
            <person name="Hauser C.A."/>
            <person name="Joyner A.L."/>
            <person name="Klein R.D."/>
            <person name="Learned T.K."/>
            <person name="Martin G.R."/>
            <person name="Tjian R."/>
        </authorList>
    </citation>
    <scope>NUCLEOTIDE SEQUENCE OF 194-269</scope>
</reference>
<sequence>MSSYFVNSFSGRYPNGPDYQLLNYGSGSSLSGSYRDPAAMHTGSYGYNYNGMDLSVNRSSASSSHFGAVGESSRAFPASAQEPRFRQATSSCSLSSPESLPCTNGDSHGAKPSASSPSDQATPASSSANFTEIDEASASSEPEEAASQLSSPSLARAQPEPMATSTAAPEGQTPQIFPWMRKLHISHDMTGPDGKRARTAYTRYQTLELEKEFHFNRYLTRRRRIEIAHALCLSERQIKIWFQNRRMKWKKDNKLKSMSLATAGSAFQP</sequence>
<protein>
    <recommendedName>
        <fullName>Homeobox protein Hox-B5</fullName>
    </recommendedName>
    <alternativeName>
        <fullName>Homeobox protein H24.1</fullName>
    </alternativeName>
    <alternativeName>
        <fullName>Homeobox protein Hox-2.1</fullName>
    </alternativeName>
    <alternativeName>
        <fullName>Homeobox protein Mu-1</fullName>
    </alternativeName>
</protein>
<accession>P09079</accession>
<accession>Q3ZAY8</accession>
<proteinExistence type="evidence at protein level"/>
<feature type="chain" id="PRO_0000200129" description="Homeobox protein Hox-B5">
    <location>
        <begin position="1"/>
        <end position="269"/>
    </location>
</feature>
<feature type="DNA-binding region" description="Homeobox" evidence="1">
    <location>
        <begin position="194"/>
        <end position="253"/>
    </location>
</feature>
<feature type="region of interest" description="Disordered" evidence="2">
    <location>
        <begin position="75"/>
        <end position="173"/>
    </location>
</feature>
<feature type="short sequence motif" description="Antp-type hexapeptide">
    <location>
        <begin position="176"/>
        <end position="181"/>
    </location>
</feature>
<feature type="compositionally biased region" description="Low complexity" evidence="2">
    <location>
        <begin position="89"/>
        <end position="103"/>
    </location>
</feature>
<feature type="compositionally biased region" description="Polar residues" evidence="2">
    <location>
        <begin position="113"/>
        <end position="130"/>
    </location>
</feature>
<feature type="compositionally biased region" description="Low complexity" evidence="2">
    <location>
        <begin position="136"/>
        <end position="158"/>
    </location>
</feature>
<feature type="compositionally biased region" description="Polar residues" evidence="2">
    <location>
        <begin position="163"/>
        <end position="173"/>
    </location>
</feature>
<feature type="sequence conflict" description="In Ref. 1; AAA37842." evidence="3" ref="1">
    <original>Q</original>
    <variation>K</variation>
    <location>
        <position position="81"/>
    </location>
</feature>
<organism>
    <name type="scientific">Mus musculus</name>
    <name type="common">Mouse</name>
    <dbReference type="NCBI Taxonomy" id="10090"/>
    <lineage>
        <taxon>Eukaryota</taxon>
        <taxon>Metazoa</taxon>
        <taxon>Chordata</taxon>
        <taxon>Craniata</taxon>
        <taxon>Vertebrata</taxon>
        <taxon>Euteleostomi</taxon>
        <taxon>Mammalia</taxon>
        <taxon>Eutheria</taxon>
        <taxon>Euarchontoglires</taxon>
        <taxon>Glires</taxon>
        <taxon>Rodentia</taxon>
        <taxon>Myomorpha</taxon>
        <taxon>Muroidea</taxon>
        <taxon>Muridae</taxon>
        <taxon>Murinae</taxon>
        <taxon>Mus</taxon>
        <taxon>Mus</taxon>
    </lineage>
</organism>
<gene>
    <name type="primary">Hoxb5</name>
    <name type="synonym">Hox-2.1</name>
    <name type="synonym">Hoxb-5</name>
</gene>
<keyword id="KW-0217">Developmental protein</keyword>
<keyword id="KW-0238">DNA-binding</keyword>
<keyword id="KW-0371">Homeobox</keyword>
<keyword id="KW-0539">Nucleus</keyword>
<keyword id="KW-1185">Reference proteome</keyword>
<keyword id="KW-0804">Transcription</keyword>
<keyword id="KW-0805">Transcription regulation</keyword>
<dbReference type="EMBL" id="M26283">
    <property type="protein sequence ID" value="AAA37842.1"/>
    <property type="molecule type" value="mRNA"/>
</dbReference>
<dbReference type="EMBL" id="AK133512">
    <property type="protein sequence ID" value="BAE21695.1"/>
    <property type="molecule type" value="mRNA"/>
</dbReference>
<dbReference type="EMBL" id="BC103595">
    <property type="protein sequence ID" value="AAI03596.1"/>
    <property type="molecule type" value="mRNA"/>
</dbReference>
<dbReference type="EMBL" id="BC103596">
    <property type="protein sequence ID" value="AAI03597.1"/>
    <property type="molecule type" value="mRNA"/>
</dbReference>
<dbReference type="EMBL" id="BC103604">
    <property type="protein sequence ID" value="AAI03605.1"/>
    <property type="molecule type" value="mRNA"/>
</dbReference>
<dbReference type="EMBL" id="BC103607">
    <property type="protein sequence ID" value="AAI03608.1"/>
    <property type="molecule type" value="mRNA"/>
</dbReference>
<dbReference type="EMBL" id="L36070">
    <property type="protein sequence ID" value="AAA50294.1"/>
    <property type="molecule type" value="Genomic_DNA"/>
</dbReference>
<dbReference type="EMBL" id="X03033">
    <property type="protein sequence ID" value="CAB57812.1"/>
    <property type="molecule type" value="Genomic_DNA"/>
</dbReference>
<dbReference type="CCDS" id="CCDS25296.1"/>
<dbReference type="PIR" id="A43551">
    <property type="entry name" value="A43551"/>
</dbReference>
<dbReference type="PIR" id="B24777">
    <property type="entry name" value="B24777"/>
</dbReference>
<dbReference type="RefSeq" id="NP_032294.2">
    <property type="nucleotide sequence ID" value="NM_008268.2"/>
</dbReference>
<dbReference type="SMR" id="P09079"/>
<dbReference type="BioGRID" id="200379">
    <property type="interactions" value="1"/>
</dbReference>
<dbReference type="FunCoup" id="P09079">
    <property type="interactions" value="2209"/>
</dbReference>
<dbReference type="IntAct" id="P09079">
    <property type="interactions" value="1"/>
</dbReference>
<dbReference type="STRING" id="10090.ENSMUSP00000035423"/>
<dbReference type="GlyGen" id="P09079">
    <property type="glycosylation" value="1 site"/>
</dbReference>
<dbReference type="iPTMnet" id="P09079"/>
<dbReference type="PhosphoSitePlus" id="P09079"/>
<dbReference type="PaxDb" id="10090-ENSMUSP00000035423"/>
<dbReference type="ProteomicsDB" id="273287"/>
<dbReference type="Antibodypedia" id="17850">
    <property type="antibodies" value="235 antibodies from 30 providers"/>
</dbReference>
<dbReference type="DNASU" id="15413"/>
<dbReference type="Ensembl" id="ENSMUST00000049272.5">
    <property type="protein sequence ID" value="ENSMUSP00000035423.4"/>
    <property type="gene ID" value="ENSMUSG00000038700.5"/>
</dbReference>
<dbReference type="GeneID" id="15413"/>
<dbReference type="KEGG" id="mmu:15413"/>
<dbReference type="UCSC" id="uc007lbu.2">
    <property type="organism name" value="mouse"/>
</dbReference>
<dbReference type="AGR" id="MGI:96186"/>
<dbReference type="CTD" id="3215"/>
<dbReference type="MGI" id="MGI:96186">
    <property type="gene designation" value="Hoxb5"/>
</dbReference>
<dbReference type="VEuPathDB" id="HostDB:ENSMUSG00000038700"/>
<dbReference type="eggNOG" id="KOG0489">
    <property type="taxonomic scope" value="Eukaryota"/>
</dbReference>
<dbReference type="GeneTree" id="ENSGT00940000158354"/>
<dbReference type="HOGENOM" id="CLU_061398_2_1_1"/>
<dbReference type="InParanoid" id="P09079"/>
<dbReference type="OMA" id="TMHSGTY"/>
<dbReference type="OrthoDB" id="6159439at2759"/>
<dbReference type="PhylomeDB" id="P09079"/>
<dbReference type="TreeFam" id="TF316310"/>
<dbReference type="BioGRID-ORCS" id="15413">
    <property type="hits" value="5 hits in 85 CRISPR screens"/>
</dbReference>
<dbReference type="PRO" id="PR:P09079"/>
<dbReference type="Proteomes" id="UP000000589">
    <property type="component" value="Chromosome 11"/>
</dbReference>
<dbReference type="RNAct" id="P09079">
    <property type="molecule type" value="protein"/>
</dbReference>
<dbReference type="Bgee" id="ENSMUSG00000038700">
    <property type="expression patterns" value="Expressed in inferior vagus X ganglion and 124 other cell types or tissues"/>
</dbReference>
<dbReference type="GO" id="GO:0005829">
    <property type="term" value="C:cytosol"/>
    <property type="evidence" value="ECO:0007669"/>
    <property type="project" value="Ensembl"/>
</dbReference>
<dbReference type="GO" id="GO:0001650">
    <property type="term" value="C:fibrillar center"/>
    <property type="evidence" value="ECO:0007669"/>
    <property type="project" value="Ensembl"/>
</dbReference>
<dbReference type="GO" id="GO:0005654">
    <property type="term" value="C:nucleoplasm"/>
    <property type="evidence" value="ECO:0007669"/>
    <property type="project" value="Ensembl"/>
</dbReference>
<dbReference type="GO" id="GO:0005634">
    <property type="term" value="C:nucleus"/>
    <property type="evidence" value="ECO:0000314"/>
    <property type="project" value="MGI"/>
</dbReference>
<dbReference type="GO" id="GO:0003677">
    <property type="term" value="F:DNA binding"/>
    <property type="evidence" value="ECO:0000314"/>
    <property type="project" value="MGI"/>
</dbReference>
<dbReference type="GO" id="GO:0001228">
    <property type="term" value="F:DNA-binding transcription activator activity, RNA polymerase II-specific"/>
    <property type="evidence" value="ECO:0000314"/>
    <property type="project" value="NTNU_SB"/>
</dbReference>
<dbReference type="GO" id="GO:0003700">
    <property type="term" value="F:DNA-binding transcription factor activity"/>
    <property type="evidence" value="ECO:0000314"/>
    <property type="project" value="MGI"/>
</dbReference>
<dbReference type="GO" id="GO:0000978">
    <property type="term" value="F:RNA polymerase II cis-regulatory region sequence-specific DNA binding"/>
    <property type="evidence" value="ECO:0000314"/>
    <property type="project" value="NTNU_SB"/>
</dbReference>
<dbReference type="GO" id="GO:0009952">
    <property type="term" value="P:anterior/posterior pattern specification"/>
    <property type="evidence" value="ECO:0000315"/>
    <property type="project" value="MGI"/>
</dbReference>
<dbReference type="GO" id="GO:0048706">
    <property type="term" value="P:embryonic skeletal system development"/>
    <property type="evidence" value="ECO:0000316"/>
    <property type="project" value="MGI"/>
</dbReference>
<dbReference type="GO" id="GO:0048704">
    <property type="term" value="P:embryonic skeletal system morphogenesis"/>
    <property type="evidence" value="ECO:0000315"/>
    <property type="project" value="MGI"/>
</dbReference>
<dbReference type="GO" id="GO:0045446">
    <property type="term" value="P:endothelial cell differentiation"/>
    <property type="evidence" value="ECO:0000314"/>
    <property type="project" value="MGI"/>
</dbReference>
<dbReference type="GO" id="GO:0045944">
    <property type="term" value="P:positive regulation of transcription by RNA polymerase II"/>
    <property type="evidence" value="ECO:0000314"/>
    <property type="project" value="NTNU_SB"/>
</dbReference>
<dbReference type="GO" id="GO:0006355">
    <property type="term" value="P:regulation of DNA-templated transcription"/>
    <property type="evidence" value="ECO:0000314"/>
    <property type="project" value="MGI"/>
</dbReference>
<dbReference type="CDD" id="cd00086">
    <property type="entry name" value="homeodomain"/>
    <property type="match status" value="1"/>
</dbReference>
<dbReference type="FunFam" id="1.10.10.60:FF:000055">
    <property type="entry name" value="Homeobox protein Hox-A5"/>
    <property type="match status" value="1"/>
</dbReference>
<dbReference type="Gene3D" id="1.10.10.60">
    <property type="entry name" value="Homeodomain-like"/>
    <property type="match status" value="1"/>
</dbReference>
<dbReference type="InterPro" id="IPR050296">
    <property type="entry name" value="Antp_homeobox"/>
</dbReference>
<dbReference type="InterPro" id="IPR001356">
    <property type="entry name" value="HD"/>
</dbReference>
<dbReference type="InterPro" id="IPR020479">
    <property type="entry name" value="HD_metazoa"/>
</dbReference>
<dbReference type="InterPro" id="IPR017995">
    <property type="entry name" value="Homeobox_antennapedia"/>
</dbReference>
<dbReference type="InterPro" id="IPR001827">
    <property type="entry name" value="Homeobox_Antennapedia_CS"/>
</dbReference>
<dbReference type="InterPro" id="IPR017970">
    <property type="entry name" value="Homeobox_CS"/>
</dbReference>
<dbReference type="InterPro" id="IPR009057">
    <property type="entry name" value="Homeodomain-like_sf"/>
</dbReference>
<dbReference type="PANTHER" id="PTHR45659">
    <property type="entry name" value="HOMEOBOX PROTEIN HOX"/>
    <property type="match status" value="1"/>
</dbReference>
<dbReference type="PANTHER" id="PTHR45659:SF2">
    <property type="entry name" value="HOMEOBOX PROTEIN HOX-B5"/>
    <property type="match status" value="1"/>
</dbReference>
<dbReference type="Pfam" id="PF00046">
    <property type="entry name" value="Homeodomain"/>
    <property type="match status" value="1"/>
</dbReference>
<dbReference type="PRINTS" id="PR00025">
    <property type="entry name" value="ANTENNAPEDIA"/>
</dbReference>
<dbReference type="PRINTS" id="PR00024">
    <property type="entry name" value="HOMEOBOX"/>
</dbReference>
<dbReference type="SMART" id="SM00389">
    <property type="entry name" value="HOX"/>
    <property type="match status" value="1"/>
</dbReference>
<dbReference type="SUPFAM" id="SSF46689">
    <property type="entry name" value="Homeodomain-like"/>
    <property type="match status" value="1"/>
</dbReference>
<dbReference type="PROSITE" id="PS00032">
    <property type="entry name" value="ANTENNAPEDIA"/>
    <property type="match status" value="1"/>
</dbReference>
<dbReference type="PROSITE" id="PS00027">
    <property type="entry name" value="HOMEOBOX_1"/>
    <property type="match status" value="1"/>
</dbReference>
<dbReference type="PROSITE" id="PS50071">
    <property type="entry name" value="HOMEOBOX_2"/>
    <property type="match status" value="1"/>
</dbReference>
<evidence type="ECO:0000255" key="1">
    <source>
        <dbReference type="PROSITE-ProRule" id="PRU00108"/>
    </source>
</evidence>
<evidence type="ECO:0000256" key="2">
    <source>
        <dbReference type="SAM" id="MobiDB-lite"/>
    </source>
</evidence>
<evidence type="ECO:0000305" key="3"/>